<comment type="function">
    <text evidence="1">DNA ligase that catalyzes the formation of phosphodiester linkages between 5'-phosphoryl and 3'-hydroxyl groups in double-stranded DNA using NAD as a coenzyme and as the energy source for the reaction. It is essential for DNA replication and repair of damaged DNA.</text>
</comment>
<comment type="catalytic activity">
    <reaction evidence="1">
        <text>NAD(+) + (deoxyribonucleotide)n-3'-hydroxyl + 5'-phospho-(deoxyribonucleotide)m = (deoxyribonucleotide)n+m + AMP + beta-nicotinamide D-nucleotide.</text>
        <dbReference type="EC" id="6.5.1.2"/>
    </reaction>
</comment>
<comment type="cofactor">
    <cofactor evidence="1">
        <name>Mg(2+)</name>
        <dbReference type="ChEBI" id="CHEBI:18420"/>
    </cofactor>
    <cofactor evidence="1">
        <name>Mn(2+)</name>
        <dbReference type="ChEBI" id="CHEBI:29035"/>
    </cofactor>
</comment>
<comment type="similarity">
    <text evidence="1">Belongs to the NAD-dependent DNA ligase family. LigA subfamily.</text>
</comment>
<evidence type="ECO:0000255" key="1">
    <source>
        <dbReference type="HAMAP-Rule" id="MF_01588"/>
    </source>
</evidence>
<sequence>MNSNFNQHFERIKELRALLNKANYSYYVLDSPEIDDAVYDQLYRELIEIENIHPSLITDDSPSQRLGGVPSKGFKNVEHNIPLLSLDNAFNLNELESWYGRISKLISSENKNIKKVDDLELICELKIDGNAISLRYENGILTRAATRGDGKTGEDITTNIRTISTIPLRLLLENPPSWVEIRGEAFMPNNIFNKLNIERKNTDQPLFANPRNSCAGTLRQLDPKIVASRKLDFFAYSLYFPENWEPTDNNFKKPISQSESLEFLKNIGFKVNTTYETTKTLNEANKYYKYWEVKKDFLAYATDGIVVKIDKFDIQNLLGATNKAPRWAIAVKYPAEEKATKLRKIIFQVGRSGAVTPVAEFESIELAGTSVNRATLHNAKRLASLDLHYEDTIIVRKAGEIIPEVIRVIKEFRKVDAKLVQLPQNCPECNSKLILESNEAITKCINYGCEAKLKGLLRHWVSKGSMNIDGLGEKIINQLVNEGYVKSIADLYKLEIDSLLELERFGEKSANNLLIEINESKNKNWHKQLYGLGIPHIGEANAKSLSNNFNSIEELNAIAKESPEKISNIYGFGNEMKDSIVKWFDDSNNQTLIKELKAIGFSLKESLDSNYNSNQSNVFDGKSFVLTGTLDSLTRDEAKELIESAGGKVSSSISKKTDFLVSGEKAGSKLNKAQELGVKIINENELKLLL</sequence>
<proteinExistence type="inferred from homology"/>
<keyword id="KW-0227">DNA damage</keyword>
<keyword id="KW-0234">DNA repair</keyword>
<keyword id="KW-0235">DNA replication</keyword>
<keyword id="KW-0436">Ligase</keyword>
<keyword id="KW-0460">Magnesium</keyword>
<keyword id="KW-0464">Manganese</keyword>
<keyword id="KW-0479">Metal-binding</keyword>
<keyword id="KW-0520">NAD</keyword>
<keyword id="KW-0862">Zinc</keyword>
<gene>
    <name evidence="1" type="primary">ligA</name>
    <name type="ordered locus">NATL1_21501</name>
</gene>
<reference key="1">
    <citation type="journal article" date="2007" name="PLoS Genet.">
        <title>Patterns and implications of gene gain and loss in the evolution of Prochlorococcus.</title>
        <authorList>
            <person name="Kettler G.C."/>
            <person name="Martiny A.C."/>
            <person name="Huang K."/>
            <person name="Zucker J."/>
            <person name="Coleman M.L."/>
            <person name="Rodrigue S."/>
            <person name="Chen F."/>
            <person name="Lapidus A."/>
            <person name="Ferriera S."/>
            <person name="Johnson J."/>
            <person name="Steglich C."/>
            <person name="Church G.M."/>
            <person name="Richardson P."/>
            <person name="Chisholm S.W."/>
        </authorList>
    </citation>
    <scope>NUCLEOTIDE SEQUENCE [LARGE SCALE GENOMIC DNA]</scope>
    <source>
        <strain>NATL1A</strain>
    </source>
</reference>
<accession>A2C5E6</accession>
<organism>
    <name type="scientific">Prochlorococcus marinus (strain NATL1A)</name>
    <dbReference type="NCBI Taxonomy" id="167555"/>
    <lineage>
        <taxon>Bacteria</taxon>
        <taxon>Bacillati</taxon>
        <taxon>Cyanobacteriota</taxon>
        <taxon>Cyanophyceae</taxon>
        <taxon>Synechococcales</taxon>
        <taxon>Prochlorococcaceae</taxon>
        <taxon>Prochlorococcus</taxon>
    </lineage>
</organism>
<dbReference type="EC" id="6.5.1.2" evidence="1"/>
<dbReference type="EMBL" id="CP000553">
    <property type="protein sequence ID" value="ABM76706.1"/>
    <property type="molecule type" value="Genomic_DNA"/>
</dbReference>
<dbReference type="RefSeq" id="WP_011824644.1">
    <property type="nucleotide sequence ID" value="NC_008819.1"/>
</dbReference>
<dbReference type="SMR" id="A2C5E6"/>
<dbReference type="KEGG" id="pme:NATL1_21501"/>
<dbReference type="eggNOG" id="COG0272">
    <property type="taxonomic scope" value="Bacteria"/>
</dbReference>
<dbReference type="HOGENOM" id="CLU_007764_2_1_3"/>
<dbReference type="Proteomes" id="UP000002592">
    <property type="component" value="Chromosome"/>
</dbReference>
<dbReference type="GO" id="GO:0005829">
    <property type="term" value="C:cytosol"/>
    <property type="evidence" value="ECO:0007669"/>
    <property type="project" value="TreeGrafter"/>
</dbReference>
<dbReference type="GO" id="GO:0003911">
    <property type="term" value="F:DNA ligase (NAD+) activity"/>
    <property type="evidence" value="ECO:0007669"/>
    <property type="project" value="UniProtKB-UniRule"/>
</dbReference>
<dbReference type="GO" id="GO:0046872">
    <property type="term" value="F:metal ion binding"/>
    <property type="evidence" value="ECO:0007669"/>
    <property type="project" value="UniProtKB-KW"/>
</dbReference>
<dbReference type="GO" id="GO:0006281">
    <property type="term" value="P:DNA repair"/>
    <property type="evidence" value="ECO:0007669"/>
    <property type="project" value="UniProtKB-KW"/>
</dbReference>
<dbReference type="GO" id="GO:0006260">
    <property type="term" value="P:DNA replication"/>
    <property type="evidence" value="ECO:0007669"/>
    <property type="project" value="UniProtKB-KW"/>
</dbReference>
<dbReference type="CDD" id="cd17748">
    <property type="entry name" value="BRCT_DNA_ligase_like"/>
    <property type="match status" value="1"/>
</dbReference>
<dbReference type="CDD" id="cd00114">
    <property type="entry name" value="LIGANc"/>
    <property type="match status" value="1"/>
</dbReference>
<dbReference type="FunFam" id="1.10.150.20:FF:000007">
    <property type="entry name" value="DNA ligase"/>
    <property type="match status" value="1"/>
</dbReference>
<dbReference type="FunFam" id="3.30.470.30:FF:000001">
    <property type="entry name" value="DNA ligase"/>
    <property type="match status" value="1"/>
</dbReference>
<dbReference type="Gene3D" id="6.20.10.30">
    <property type="match status" value="1"/>
</dbReference>
<dbReference type="Gene3D" id="1.10.150.20">
    <property type="entry name" value="5' to 3' exonuclease, C-terminal subdomain"/>
    <property type="match status" value="2"/>
</dbReference>
<dbReference type="Gene3D" id="3.40.50.10190">
    <property type="entry name" value="BRCT domain"/>
    <property type="match status" value="1"/>
</dbReference>
<dbReference type="Gene3D" id="3.30.470.30">
    <property type="entry name" value="DNA ligase/mRNA capping enzyme"/>
    <property type="match status" value="1"/>
</dbReference>
<dbReference type="Gene3D" id="1.10.287.610">
    <property type="entry name" value="Helix hairpin bin"/>
    <property type="match status" value="1"/>
</dbReference>
<dbReference type="Gene3D" id="2.40.50.140">
    <property type="entry name" value="Nucleic acid-binding proteins"/>
    <property type="match status" value="1"/>
</dbReference>
<dbReference type="HAMAP" id="MF_01588">
    <property type="entry name" value="DNA_ligase_A"/>
    <property type="match status" value="1"/>
</dbReference>
<dbReference type="InterPro" id="IPR001357">
    <property type="entry name" value="BRCT_dom"/>
</dbReference>
<dbReference type="InterPro" id="IPR036420">
    <property type="entry name" value="BRCT_dom_sf"/>
</dbReference>
<dbReference type="InterPro" id="IPR041663">
    <property type="entry name" value="DisA/LigA_HHH"/>
</dbReference>
<dbReference type="InterPro" id="IPR001679">
    <property type="entry name" value="DNA_ligase"/>
</dbReference>
<dbReference type="InterPro" id="IPR033136">
    <property type="entry name" value="DNA_ligase_CS"/>
</dbReference>
<dbReference type="InterPro" id="IPR013839">
    <property type="entry name" value="DNAligase_adenylation"/>
</dbReference>
<dbReference type="InterPro" id="IPR013840">
    <property type="entry name" value="DNAligase_N"/>
</dbReference>
<dbReference type="InterPro" id="IPR012340">
    <property type="entry name" value="NA-bd_OB-fold"/>
</dbReference>
<dbReference type="InterPro" id="IPR004150">
    <property type="entry name" value="NAD_DNA_ligase_OB"/>
</dbReference>
<dbReference type="InterPro" id="IPR010994">
    <property type="entry name" value="RuvA_2-like"/>
</dbReference>
<dbReference type="InterPro" id="IPR004149">
    <property type="entry name" value="Znf_DNAligase_C4"/>
</dbReference>
<dbReference type="NCBIfam" id="TIGR00575">
    <property type="entry name" value="dnlj"/>
    <property type="match status" value="1"/>
</dbReference>
<dbReference type="NCBIfam" id="NF005932">
    <property type="entry name" value="PRK07956.1"/>
    <property type="match status" value="1"/>
</dbReference>
<dbReference type="PANTHER" id="PTHR23389">
    <property type="entry name" value="CHROMOSOME TRANSMISSION FIDELITY FACTOR 18"/>
    <property type="match status" value="1"/>
</dbReference>
<dbReference type="PANTHER" id="PTHR23389:SF9">
    <property type="entry name" value="DNA LIGASE"/>
    <property type="match status" value="1"/>
</dbReference>
<dbReference type="Pfam" id="PF00533">
    <property type="entry name" value="BRCT"/>
    <property type="match status" value="1"/>
</dbReference>
<dbReference type="Pfam" id="PF01653">
    <property type="entry name" value="DNA_ligase_aden"/>
    <property type="match status" value="1"/>
</dbReference>
<dbReference type="Pfam" id="PF03120">
    <property type="entry name" value="DNA_ligase_OB"/>
    <property type="match status" value="1"/>
</dbReference>
<dbReference type="Pfam" id="PF03119">
    <property type="entry name" value="DNA_ligase_ZBD"/>
    <property type="match status" value="1"/>
</dbReference>
<dbReference type="Pfam" id="PF12826">
    <property type="entry name" value="HHH_2"/>
    <property type="match status" value="1"/>
</dbReference>
<dbReference type="Pfam" id="PF14520">
    <property type="entry name" value="HHH_5"/>
    <property type="match status" value="1"/>
</dbReference>
<dbReference type="Pfam" id="PF22745">
    <property type="entry name" value="Nlig-Ia"/>
    <property type="match status" value="1"/>
</dbReference>
<dbReference type="PIRSF" id="PIRSF001604">
    <property type="entry name" value="LigA"/>
    <property type="match status" value="1"/>
</dbReference>
<dbReference type="SMART" id="SM00292">
    <property type="entry name" value="BRCT"/>
    <property type="match status" value="1"/>
</dbReference>
<dbReference type="SMART" id="SM00532">
    <property type="entry name" value="LIGANc"/>
    <property type="match status" value="1"/>
</dbReference>
<dbReference type="SUPFAM" id="SSF52113">
    <property type="entry name" value="BRCT domain"/>
    <property type="match status" value="1"/>
</dbReference>
<dbReference type="SUPFAM" id="SSF56091">
    <property type="entry name" value="DNA ligase/mRNA capping enzyme, catalytic domain"/>
    <property type="match status" value="1"/>
</dbReference>
<dbReference type="SUPFAM" id="SSF50249">
    <property type="entry name" value="Nucleic acid-binding proteins"/>
    <property type="match status" value="1"/>
</dbReference>
<dbReference type="SUPFAM" id="SSF47781">
    <property type="entry name" value="RuvA domain 2-like"/>
    <property type="match status" value="1"/>
</dbReference>
<dbReference type="PROSITE" id="PS50172">
    <property type="entry name" value="BRCT"/>
    <property type="match status" value="1"/>
</dbReference>
<dbReference type="PROSITE" id="PS01056">
    <property type="entry name" value="DNA_LIGASE_N2"/>
    <property type="match status" value="1"/>
</dbReference>
<protein>
    <recommendedName>
        <fullName evidence="1">DNA ligase</fullName>
        <ecNumber evidence="1">6.5.1.2</ecNumber>
    </recommendedName>
    <alternativeName>
        <fullName evidence="1">Polydeoxyribonucleotide synthase [NAD(+)]</fullName>
    </alternativeName>
</protein>
<name>DNLJ_PROM1</name>
<feature type="chain" id="PRO_0000313367" description="DNA ligase">
    <location>
        <begin position="1"/>
        <end position="690"/>
    </location>
</feature>
<feature type="domain" description="BRCT" evidence="1">
    <location>
        <begin position="614"/>
        <end position="690"/>
    </location>
</feature>
<feature type="active site" description="N6-AMP-lysine intermediate" evidence="1">
    <location>
        <position position="126"/>
    </location>
</feature>
<feature type="binding site" evidence="1">
    <location>
        <begin position="36"/>
        <end position="40"/>
    </location>
    <ligand>
        <name>NAD(+)</name>
        <dbReference type="ChEBI" id="CHEBI:57540"/>
    </ligand>
</feature>
<feature type="binding site" evidence="1">
    <location>
        <begin position="85"/>
        <end position="86"/>
    </location>
    <ligand>
        <name>NAD(+)</name>
        <dbReference type="ChEBI" id="CHEBI:57540"/>
    </ligand>
</feature>
<feature type="binding site" evidence="1">
    <location>
        <position position="124"/>
    </location>
    <ligand>
        <name>NAD(+)</name>
        <dbReference type="ChEBI" id="CHEBI:57540"/>
    </ligand>
</feature>
<feature type="binding site" evidence="1">
    <location>
        <position position="147"/>
    </location>
    <ligand>
        <name>NAD(+)</name>
        <dbReference type="ChEBI" id="CHEBI:57540"/>
    </ligand>
</feature>
<feature type="binding site" evidence="1">
    <location>
        <position position="184"/>
    </location>
    <ligand>
        <name>NAD(+)</name>
        <dbReference type="ChEBI" id="CHEBI:57540"/>
    </ligand>
</feature>
<feature type="binding site" evidence="1">
    <location>
        <position position="308"/>
    </location>
    <ligand>
        <name>NAD(+)</name>
        <dbReference type="ChEBI" id="CHEBI:57540"/>
    </ligand>
</feature>
<feature type="binding site" evidence="1">
    <location>
        <position position="332"/>
    </location>
    <ligand>
        <name>NAD(+)</name>
        <dbReference type="ChEBI" id="CHEBI:57540"/>
    </ligand>
</feature>
<feature type="binding site" evidence="1">
    <location>
        <position position="426"/>
    </location>
    <ligand>
        <name>Zn(2+)</name>
        <dbReference type="ChEBI" id="CHEBI:29105"/>
    </ligand>
</feature>
<feature type="binding site" evidence="1">
    <location>
        <position position="429"/>
    </location>
    <ligand>
        <name>Zn(2+)</name>
        <dbReference type="ChEBI" id="CHEBI:29105"/>
    </ligand>
</feature>
<feature type="binding site" evidence="1">
    <location>
        <position position="444"/>
    </location>
    <ligand>
        <name>Zn(2+)</name>
        <dbReference type="ChEBI" id="CHEBI:29105"/>
    </ligand>
</feature>
<feature type="binding site" evidence="1">
    <location>
        <position position="449"/>
    </location>
    <ligand>
        <name>Zn(2+)</name>
        <dbReference type="ChEBI" id="CHEBI:29105"/>
    </ligand>
</feature>